<evidence type="ECO:0000269" key="1">
    <source>
    </source>
</evidence>
<evidence type="ECO:0000269" key="2">
    <source>
    </source>
</evidence>
<evidence type="ECO:0000269" key="3">
    <source>
    </source>
</evidence>
<evidence type="ECO:0000305" key="4"/>
<comment type="subcellular location">
    <subcellularLocation>
        <location evidence="1 3">Mitochondrion</location>
    </subcellularLocation>
</comment>
<comment type="miscellaneous">
    <text evidence="2">Present with 752 molecules/cell in log phase SD medium.</text>
</comment>
<comment type="similarity">
    <text evidence="4">To S.pombe tam6.</text>
</comment>
<protein>
    <recommendedName>
        <fullName>Uncharacterized protein YDL157C, mitochondrial</fullName>
    </recommendedName>
</protein>
<name>YD157_YEAST</name>
<feature type="chain" id="PRO_0000240875" description="Uncharacterized protein YDL157C, mitochondrial">
    <location>
        <begin position="1"/>
        <end position="118"/>
    </location>
</feature>
<gene>
    <name type="ordered locus">YDL157C</name>
    <name type="ORF">D1533</name>
</gene>
<keyword id="KW-0496">Mitochondrion</keyword>
<keyword id="KW-1185">Reference proteome</keyword>
<organism>
    <name type="scientific">Saccharomyces cerevisiae (strain ATCC 204508 / S288c)</name>
    <name type="common">Baker's yeast</name>
    <dbReference type="NCBI Taxonomy" id="559292"/>
    <lineage>
        <taxon>Eukaryota</taxon>
        <taxon>Fungi</taxon>
        <taxon>Dikarya</taxon>
        <taxon>Ascomycota</taxon>
        <taxon>Saccharomycotina</taxon>
        <taxon>Saccharomycetes</taxon>
        <taxon>Saccharomycetales</taxon>
        <taxon>Saccharomycetaceae</taxon>
        <taxon>Saccharomyces</taxon>
    </lineage>
</organism>
<dbReference type="EMBL" id="X97751">
    <property type="protein sequence ID" value="CAA66334.1"/>
    <property type="molecule type" value="Genomic_DNA"/>
</dbReference>
<dbReference type="EMBL" id="Z67750">
    <property type="protein sequence ID" value="CAA91589.1"/>
    <property type="molecule type" value="Genomic_DNA"/>
</dbReference>
<dbReference type="EMBL" id="Z74205">
    <property type="protein sequence ID" value="CAA98731.1"/>
    <property type="molecule type" value="Genomic_DNA"/>
</dbReference>
<dbReference type="EMBL" id="AY557638">
    <property type="protein sequence ID" value="AAS55964.1"/>
    <property type="molecule type" value="Genomic_DNA"/>
</dbReference>
<dbReference type="EMBL" id="BK006938">
    <property type="protein sequence ID" value="DAA11703.1"/>
    <property type="molecule type" value="Genomic_DNA"/>
</dbReference>
<dbReference type="PIR" id="S61056">
    <property type="entry name" value="S61056"/>
</dbReference>
<dbReference type="BioGRID" id="31906">
    <property type="interactions" value="249"/>
</dbReference>
<dbReference type="DIP" id="DIP-2041N"/>
<dbReference type="FunCoup" id="Q12082">
    <property type="interactions" value="33"/>
</dbReference>
<dbReference type="IntAct" id="Q12082">
    <property type="interactions" value="1"/>
</dbReference>
<dbReference type="STRING" id="4932.YDL157C"/>
<dbReference type="PaxDb" id="4932-YDL157C"/>
<dbReference type="PeptideAtlas" id="Q12082"/>
<dbReference type="EnsemblFungi" id="YDL157C_mRNA">
    <property type="protein sequence ID" value="YDL157C"/>
    <property type="gene ID" value="YDL157C"/>
</dbReference>
<dbReference type="KEGG" id="sce:YDL157C"/>
<dbReference type="AGR" id="SGD:S000002316"/>
<dbReference type="SGD" id="S000002316">
    <property type="gene designation" value="YDL157C"/>
</dbReference>
<dbReference type="VEuPathDB" id="FungiDB:YDL157C"/>
<dbReference type="eggNOG" id="ENOG502S2HK">
    <property type="taxonomic scope" value="Eukaryota"/>
</dbReference>
<dbReference type="HOGENOM" id="CLU_148825_0_0_1"/>
<dbReference type="InParanoid" id="Q12082"/>
<dbReference type="OMA" id="EGWLWNK"/>
<dbReference type="OrthoDB" id="4083608at2759"/>
<dbReference type="BioCyc" id="YEAST:G3O-29552-MONOMER"/>
<dbReference type="BioGRID-ORCS" id="851398">
    <property type="hits" value="0 hits in 10 CRISPR screens"/>
</dbReference>
<dbReference type="PRO" id="PR:Q12082"/>
<dbReference type="Proteomes" id="UP000002311">
    <property type="component" value="Chromosome IV"/>
</dbReference>
<dbReference type="RNAct" id="Q12082">
    <property type="molecule type" value="protein"/>
</dbReference>
<dbReference type="GO" id="GO:0005739">
    <property type="term" value="C:mitochondrion"/>
    <property type="evidence" value="ECO:0007005"/>
    <property type="project" value="SGD"/>
</dbReference>
<dbReference type="GO" id="GO:0005777">
    <property type="term" value="C:peroxisome"/>
    <property type="evidence" value="ECO:0000314"/>
    <property type="project" value="SGD"/>
</dbReference>
<dbReference type="InterPro" id="IPR053092">
    <property type="entry name" value="Mitochondrial_unc_protein"/>
</dbReference>
<dbReference type="PANTHER" id="PTHR28048">
    <property type="entry name" value="ACR195WP"/>
    <property type="match status" value="1"/>
</dbReference>
<dbReference type="PANTHER" id="PTHR28048:SF1">
    <property type="entry name" value="ACR195WP"/>
    <property type="match status" value="1"/>
</dbReference>
<reference key="1">
    <citation type="journal article" date="1996" name="Yeast">
        <title>Analysis of a 23 kb region on the left arm of yeast chromosome IV.</title>
        <authorList>
            <person name="Delaveau T.T.D."/>
            <person name="Blugeon C."/>
            <person name="Jacq C."/>
            <person name="Perea J."/>
        </authorList>
    </citation>
    <scope>NUCLEOTIDE SEQUENCE [GENOMIC DNA]</scope>
    <source>
        <strain>ATCC 90840 / EAY235 / FY23</strain>
    </source>
</reference>
<reference key="2">
    <citation type="journal article" date="1997" name="Nature">
        <title>The nucleotide sequence of Saccharomyces cerevisiae chromosome IV.</title>
        <authorList>
            <person name="Jacq C."/>
            <person name="Alt-Moerbe J."/>
            <person name="Andre B."/>
            <person name="Arnold W."/>
            <person name="Bahr A."/>
            <person name="Ballesta J.P.G."/>
            <person name="Bargues M."/>
            <person name="Baron L."/>
            <person name="Becker A."/>
            <person name="Biteau N."/>
            <person name="Bloecker H."/>
            <person name="Blugeon C."/>
            <person name="Boskovic J."/>
            <person name="Brandt P."/>
            <person name="Brueckner M."/>
            <person name="Buitrago M.J."/>
            <person name="Coster F."/>
            <person name="Delaveau T."/>
            <person name="del Rey F."/>
            <person name="Dujon B."/>
            <person name="Eide L.G."/>
            <person name="Garcia-Cantalejo J.M."/>
            <person name="Goffeau A."/>
            <person name="Gomez-Peris A."/>
            <person name="Granotier C."/>
            <person name="Hanemann V."/>
            <person name="Hankeln T."/>
            <person name="Hoheisel J.D."/>
            <person name="Jaeger W."/>
            <person name="Jimenez A."/>
            <person name="Jonniaux J.-L."/>
            <person name="Kraemer C."/>
            <person name="Kuester H."/>
            <person name="Laamanen P."/>
            <person name="Legros Y."/>
            <person name="Louis E.J."/>
            <person name="Moeller-Rieker S."/>
            <person name="Monnet A."/>
            <person name="Moro M."/>
            <person name="Mueller-Auer S."/>
            <person name="Nussbaumer B."/>
            <person name="Paricio N."/>
            <person name="Paulin L."/>
            <person name="Perea J."/>
            <person name="Perez-Alonso M."/>
            <person name="Perez-Ortin J.E."/>
            <person name="Pohl T.M."/>
            <person name="Prydz H."/>
            <person name="Purnelle B."/>
            <person name="Rasmussen S.W."/>
            <person name="Remacha M.A."/>
            <person name="Revuelta J.L."/>
            <person name="Rieger M."/>
            <person name="Salom D."/>
            <person name="Saluz H.P."/>
            <person name="Saiz J.E."/>
            <person name="Saren A.-M."/>
            <person name="Schaefer M."/>
            <person name="Scharfe M."/>
            <person name="Schmidt E.R."/>
            <person name="Schneider C."/>
            <person name="Scholler P."/>
            <person name="Schwarz S."/>
            <person name="Soler-Mira A."/>
            <person name="Urrestarazu L.A."/>
            <person name="Verhasselt P."/>
            <person name="Vissers S."/>
            <person name="Voet M."/>
            <person name="Volckaert G."/>
            <person name="Wagner G."/>
            <person name="Wambutt R."/>
            <person name="Wedler E."/>
            <person name="Wedler H."/>
            <person name="Woelfl S."/>
            <person name="Harris D.E."/>
            <person name="Bowman S."/>
            <person name="Brown D."/>
            <person name="Churcher C.M."/>
            <person name="Connor R."/>
            <person name="Dedman K."/>
            <person name="Gentles S."/>
            <person name="Hamlin N."/>
            <person name="Hunt S."/>
            <person name="Jones L."/>
            <person name="McDonald S."/>
            <person name="Murphy L.D."/>
            <person name="Niblett D."/>
            <person name="Odell C."/>
            <person name="Oliver K."/>
            <person name="Rajandream M.A."/>
            <person name="Richards C."/>
            <person name="Shore L."/>
            <person name="Walsh S.V."/>
            <person name="Barrell B.G."/>
            <person name="Dietrich F.S."/>
            <person name="Mulligan J.T."/>
            <person name="Allen E."/>
            <person name="Araujo R."/>
            <person name="Aviles E."/>
            <person name="Berno A."/>
            <person name="Carpenter J."/>
            <person name="Chen E."/>
            <person name="Cherry J.M."/>
            <person name="Chung E."/>
            <person name="Duncan M."/>
            <person name="Hunicke-Smith S."/>
            <person name="Hyman R.W."/>
            <person name="Komp C."/>
            <person name="Lashkari D."/>
            <person name="Lew H."/>
            <person name="Lin D."/>
            <person name="Mosedale D."/>
            <person name="Nakahara K."/>
            <person name="Namath A."/>
            <person name="Oefner P."/>
            <person name="Oh C."/>
            <person name="Petel F.X."/>
            <person name="Roberts D."/>
            <person name="Schramm S."/>
            <person name="Schroeder M."/>
            <person name="Shogren T."/>
            <person name="Shroff N."/>
            <person name="Winant A."/>
            <person name="Yelton M.A."/>
            <person name="Botstein D."/>
            <person name="Davis R.W."/>
            <person name="Johnston M."/>
            <person name="Andrews S."/>
            <person name="Brinkman R."/>
            <person name="Cooper J."/>
            <person name="Ding H."/>
            <person name="Du Z."/>
            <person name="Favello A."/>
            <person name="Fulton L."/>
            <person name="Gattung S."/>
            <person name="Greco T."/>
            <person name="Hallsworth K."/>
            <person name="Hawkins J."/>
            <person name="Hillier L.W."/>
            <person name="Jier M."/>
            <person name="Johnson D."/>
            <person name="Johnston L."/>
            <person name="Kirsten J."/>
            <person name="Kucaba T."/>
            <person name="Langston Y."/>
            <person name="Latreille P."/>
            <person name="Le T."/>
            <person name="Mardis E."/>
            <person name="Menezes S."/>
            <person name="Miller N."/>
            <person name="Nhan M."/>
            <person name="Pauley A."/>
            <person name="Peluso D."/>
            <person name="Rifkin L."/>
            <person name="Riles L."/>
            <person name="Taich A."/>
            <person name="Trevaskis E."/>
            <person name="Vignati D."/>
            <person name="Wilcox L."/>
            <person name="Wohldman P."/>
            <person name="Vaudin M."/>
            <person name="Wilson R."/>
            <person name="Waterston R."/>
            <person name="Albermann K."/>
            <person name="Hani J."/>
            <person name="Heumann K."/>
            <person name="Kleine K."/>
            <person name="Mewes H.-W."/>
            <person name="Zollner A."/>
            <person name="Zaccaria P."/>
        </authorList>
    </citation>
    <scope>NUCLEOTIDE SEQUENCE [LARGE SCALE GENOMIC DNA]</scope>
    <source>
        <strain>ATCC 204508 / S288c</strain>
    </source>
</reference>
<reference key="3">
    <citation type="journal article" date="2014" name="G3 (Bethesda)">
        <title>The reference genome sequence of Saccharomyces cerevisiae: Then and now.</title>
        <authorList>
            <person name="Engel S.R."/>
            <person name="Dietrich F.S."/>
            <person name="Fisk D.G."/>
            <person name="Binkley G."/>
            <person name="Balakrishnan R."/>
            <person name="Costanzo M.C."/>
            <person name="Dwight S.S."/>
            <person name="Hitz B.C."/>
            <person name="Karra K."/>
            <person name="Nash R.S."/>
            <person name="Weng S."/>
            <person name="Wong E.D."/>
            <person name="Lloyd P."/>
            <person name="Skrzypek M.S."/>
            <person name="Miyasato S.R."/>
            <person name="Simison M."/>
            <person name="Cherry J.M."/>
        </authorList>
    </citation>
    <scope>GENOME REANNOTATION</scope>
    <source>
        <strain>ATCC 204508 / S288c</strain>
    </source>
</reference>
<reference key="4">
    <citation type="journal article" date="2007" name="Genome Res.">
        <title>Approaching a complete repository of sequence-verified protein-encoding clones for Saccharomyces cerevisiae.</title>
        <authorList>
            <person name="Hu Y."/>
            <person name="Rolfs A."/>
            <person name="Bhullar B."/>
            <person name="Murthy T.V.S."/>
            <person name="Zhu C."/>
            <person name="Berger M.F."/>
            <person name="Camargo A.A."/>
            <person name="Kelley F."/>
            <person name="McCarron S."/>
            <person name="Jepson D."/>
            <person name="Richardson A."/>
            <person name="Raphael J."/>
            <person name="Moreira D."/>
            <person name="Taycher E."/>
            <person name="Zuo D."/>
            <person name="Mohr S."/>
            <person name="Kane M.F."/>
            <person name="Williamson J."/>
            <person name="Simpson A.J.G."/>
            <person name="Bulyk M.L."/>
            <person name="Harlow E."/>
            <person name="Marsischky G."/>
            <person name="Kolodner R.D."/>
            <person name="LaBaer J."/>
        </authorList>
    </citation>
    <scope>NUCLEOTIDE SEQUENCE [GENOMIC DNA]</scope>
    <source>
        <strain>ATCC 204508 / S288c</strain>
    </source>
</reference>
<reference key="5">
    <citation type="journal article" date="2003" name="Nature">
        <title>Global analysis of protein localization in budding yeast.</title>
        <authorList>
            <person name="Huh W.-K."/>
            <person name="Falvo J.V."/>
            <person name="Gerke L.C."/>
            <person name="Carroll A.S."/>
            <person name="Howson R.W."/>
            <person name="Weissman J.S."/>
            <person name="O'Shea E.K."/>
        </authorList>
    </citation>
    <scope>SUBCELLULAR LOCATION [LARGE SCALE ANALYSIS]</scope>
</reference>
<reference key="6">
    <citation type="journal article" date="2003" name="Nature">
        <title>Global analysis of protein expression in yeast.</title>
        <authorList>
            <person name="Ghaemmaghami S."/>
            <person name="Huh W.-K."/>
            <person name="Bower K."/>
            <person name="Howson R.W."/>
            <person name="Belle A."/>
            <person name="Dephoure N."/>
            <person name="O'Shea E.K."/>
            <person name="Weissman J.S."/>
        </authorList>
    </citation>
    <scope>LEVEL OF PROTEIN EXPRESSION [LARGE SCALE ANALYSIS]</scope>
</reference>
<reference key="7">
    <citation type="journal article" date="2003" name="Proc. Natl. Acad. Sci. U.S.A.">
        <title>The proteome of Saccharomyces cerevisiae mitochondria.</title>
        <authorList>
            <person name="Sickmann A."/>
            <person name="Reinders J."/>
            <person name="Wagner Y."/>
            <person name="Joppich C."/>
            <person name="Zahedi R.P."/>
            <person name="Meyer H.E."/>
            <person name="Schoenfisch B."/>
            <person name="Perschil I."/>
            <person name="Chacinska A."/>
            <person name="Guiard B."/>
            <person name="Rehling P."/>
            <person name="Pfanner N."/>
            <person name="Meisinger C."/>
        </authorList>
    </citation>
    <scope>SUBCELLULAR LOCATION [LARGE SCALE ANALYSIS]</scope>
    <source>
        <strain>ATCC 76625 / YPH499</strain>
    </source>
</reference>
<accession>Q12082</accession>
<accession>D6VRJ3</accession>
<sequence>MSNILAVFNPPPQRELEKEETMDCVPCQVMSTMFSVGFGSYLASGKPFKYGKKEAKRGISLTEFEKRNPQWWKVTLRSFGGLLIAFGFVRGTEGWLWHKNKEYKNYKKLSNDGETQAN</sequence>
<proteinExistence type="evidence at protein level"/>